<sequence>MLIGEIMDLNLKNFLEDREEIIRDAKRKDEKSFKDFKKIVEEIKERENKDKIVCDFTEYNPLHKGHKYALEKGKEHGIFISVLPGPLERSGRGIPYFLNRYIRAEMAIRAGADIVVEGPPMGIMGSGQYMRCLIKMFYSLGAEIIPRGYIPEKTMEKVIDCINKGYHIQVKPYKIICIETGEILGEKLNIDNYVIASMSQMIYKLNREGLKFNPKFVFVKRLEGISGTKIREAIFSGKFEDIKNMLPKTTLSILKELYDNGKLNELILKRFEDRILETANEYDLYEYLPSNVAEILEKKRPFNNIEEIKNSLPYGFSRHFRERILSKLEARIPNETLSKYINNYPAKIKILAVKL</sequence>
<gene>
    <name type="ordered locus">MJ0951</name>
</gene>
<proteinExistence type="evidence at protein level"/>
<dbReference type="EMBL" id="L77117">
    <property type="protein sequence ID" value="AAB98952.1"/>
    <property type="molecule type" value="Genomic_DNA"/>
</dbReference>
<dbReference type="PIR" id="G64418">
    <property type="entry name" value="G64418"/>
</dbReference>
<dbReference type="RefSeq" id="WP_010870465.1">
    <property type="nucleotide sequence ID" value="NC_000909.1"/>
</dbReference>
<dbReference type="PDB" id="3GMI">
    <property type="method" value="X-ray"/>
    <property type="resolution" value="1.91 A"/>
    <property type="chains" value="A=1-355"/>
</dbReference>
<dbReference type="PDBsum" id="3GMI"/>
<dbReference type="SMR" id="Q58361"/>
<dbReference type="STRING" id="243232.MJ_0951"/>
<dbReference type="PaxDb" id="243232-MJ_0951"/>
<dbReference type="DNASU" id="1451848"/>
<dbReference type="EnsemblBacteria" id="AAB98952">
    <property type="protein sequence ID" value="AAB98952"/>
    <property type="gene ID" value="MJ_0951"/>
</dbReference>
<dbReference type="GeneID" id="1451848"/>
<dbReference type="KEGG" id="mja:MJ_0951"/>
<dbReference type="eggNOG" id="arCOG03224">
    <property type="taxonomic scope" value="Archaea"/>
</dbReference>
<dbReference type="HOGENOM" id="CLU_777585_0_0_2"/>
<dbReference type="InParanoid" id="Q58361"/>
<dbReference type="OrthoDB" id="68916at2157"/>
<dbReference type="PhylomeDB" id="Q58361"/>
<dbReference type="EvolutionaryTrace" id="Q58361"/>
<dbReference type="Proteomes" id="UP000000805">
    <property type="component" value="Chromosome"/>
</dbReference>
<dbReference type="Gene3D" id="1.20.58.620">
    <property type="match status" value="1"/>
</dbReference>
<dbReference type="Gene3D" id="3.40.50.620">
    <property type="entry name" value="HUPs"/>
    <property type="match status" value="1"/>
</dbReference>
<dbReference type="InterPro" id="IPR032266">
    <property type="entry name" value="HIGH_NTase1_ass"/>
</dbReference>
<dbReference type="InterPro" id="IPR014729">
    <property type="entry name" value="Rossmann-like_a/b/a_fold"/>
</dbReference>
<dbReference type="InterPro" id="IPR008513">
    <property type="entry name" value="tRNA(Met)_cyd_acetate_ligase"/>
</dbReference>
<dbReference type="PANTHER" id="PTHR37825">
    <property type="entry name" value="TRNA(MET) CYTIDINE ACETATE LIGASE"/>
    <property type="match status" value="1"/>
</dbReference>
<dbReference type="PANTHER" id="PTHR37825:SF1">
    <property type="entry name" value="TRNA(MET) CYTIDINE ACETATE LIGASE"/>
    <property type="match status" value="1"/>
</dbReference>
<dbReference type="Pfam" id="PF05636">
    <property type="entry name" value="HIGH_NTase1"/>
    <property type="match status" value="1"/>
</dbReference>
<dbReference type="Pfam" id="PF16581">
    <property type="entry name" value="HIGH_NTase1_ass"/>
    <property type="match status" value="1"/>
</dbReference>
<dbReference type="SUPFAM" id="SSF52374">
    <property type="entry name" value="Nucleotidylyl transferase"/>
    <property type="match status" value="1"/>
</dbReference>
<keyword id="KW-0002">3D-structure</keyword>
<keyword id="KW-1185">Reference proteome</keyword>
<reference key="1">
    <citation type="journal article" date="1996" name="Science">
        <title>Complete genome sequence of the methanogenic archaeon, Methanococcus jannaschii.</title>
        <authorList>
            <person name="Bult C.J."/>
            <person name="White O."/>
            <person name="Olsen G.J."/>
            <person name="Zhou L."/>
            <person name="Fleischmann R.D."/>
            <person name="Sutton G.G."/>
            <person name="Blake J.A."/>
            <person name="FitzGerald L.M."/>
            <person name="Clayton R.A."/>
            <person name="Gocayne J.D."/>
            <person name="Kerlavage A.R."/>
            <person name="Dougherty B.A."/>
            <person name="Tomb J.-F."/>
            <person name="Adams M.D."/>
            <person name="Reich C.I."/>
            <person name="Overbeek R."/>
            <person name="Kirkness E.F."/>
            <person name="Weinstock K.G."/>
            <person name="Merrick J.M."/>
            <person name="Glodek A."/>
            <person name="Scott J.L."/>
            <person name="Geoghagen N.S.M."/>
            <person name="Weidman J.F."/>
            <person name="Fuhrmann J.L."/>
            <person name="Nguyen D."/>
            <person name="Utterback T.R."/>
            <person name="Kelley J.M."/>
            <person name="Peterson J.D."/>
            <person name="Sadow P.W."/>
            <person name="Hanna M.C."/>
            <person name="Cotton M.D."/>
            <person name="Roberts K.M."/>
            <person name="Hurst M.A."/>
            <person name="Kaine B.P."/>
            <person name="Borodovsky M."/>
            <person name="Klenk H.-P."/>
            <person name="Fraser C.M."/>
            <person name="Smith H.O."/>
            <person name="Woese C.R."/>
            <person name="Venter J.C."/>
        </authorList>
    </citation>
    <scope>NUCLEOTIDE SEQUENCE [LARGE SCALE GENOMIC DNA]</scope>
    <source>
        <strain>ATCC 43067 / DSM 2661 / JAL-1 / JCM 10045 / NBRC 100440</strain>
    </source>
</reference>
<evidence type="ECO:0000305" key="1"/>
<evidence type="ECO:0007829" key="2">
    <source>
        <dbReference type="PDB" id="3GMI"/>
    </source>
</evidence>
<comment type="similarity">
    <text evidence="1">Belongs to the TmcAL family.</text>
</comment>
<name>Y951_METJA</name>
<protein>
    <recommendedName>
        <fullName>Uncharacterized protein MJ0951</fullName>
    </recommendedName>
</protein>
<feature type="chain" id="PRO_0000147199" description="Uncharacterized protein MJ0951">
    <location>
        <begin position="1"/>
        <end position="355"/>
    </location>
</feature>
<feature type="helix" evidence="2">
    <location>
        <begin position="1"/>
        <end position="26"/>
    </location>
</feature>
<feature type="helix" evidence="2">
    <location>
        <begin position="30"/>
        <end position="47"/>
    </location>
</feature>
<feature type="strand" evidence="2">
    <location>
        <begin position="52"/>
        <end position="56"/>
    </location>
</feature>
<feature type="helix" evidence="2">
    <location>
        <begin position="64"/>
        <end position="74"/>
    </location>
</feature>
<feature type="strand" evidence="2">
    <location>
        <begin position="76"/>
        <end position="83"/>
    </location>
</feature>
<feature type="strand" evidence="2">
    <location>
        <begin position="93"/>
        <end position="95"/>
    </location>
</feature>
<feature type="helix" evidence="2">
    <location>
        <begin position="100"/>
        <end position="110"/>
    </location>
</feature>
<feature type="strand" evidence="2">
    <location>
        <begin position="113"/>
        <end position="117"/>
    </location>
</feature>
<feature type="helix" evidence="2">
    <location>
        <begin position="121"/>
        <end position="123"/>
    </location>
</feature>
<feature type="helix" evidence="2">
    <location>
        <begin position="126"/>
        <end position="140"/>
    </location>
</feature>
<feature type="strand" evidence="2">
    <location>
        <begin position="144"/>
        <end position="149"/>
    </location>
</feature>
<feature type="helix" evidence="2">
    <location>
        <begin position="153"/>
        <end position="163"/>
    </location>
</feature>
<feature type="strand" evidence="2">
    <location>
        <begin position="168"/>
        <end position="171"/>
    </location>
</feature>
<feature type="strand" evidence="2">
    <location>
        <begin position="174"/>
        <end position="177"/>
    </location>
</feature>
<feature type="turn" evidence="2">
    <location>
        <begin position="178"/>
        <end position="180"/>
    </location>
</feature>
<feature type="strand" evidence="2">
    <location>
        <begin position="183"/>
        <end position="186"/>
    </location>
</feature>
<feature type="helix" evidence="2">
    <location>
        <begin position="190"/>
        <end position="192"/>
    </location>
</feature>
<feature type="helix" evidence="2">
    <location>
        <begin position="193"/>
        <end position="207"/>
    </location>
</feature>
<feature type="strand" evidence="2">
    <location>
        <begin position="215"/>
        <end position="220"/>
    </location>
</feature>
<feature type="helix" evidence="2">
    <location>
        <begin position="227"/>
        <end position="235"/>
    </location>
</feature>
<feature type="helix" evidence="2">
    <location>
        <begin position="239"/>
        <end position="241"/>
    </location>
</feature>
<feature type="helix" evidence="2">
    <location>
        <begin position="243"/>
        <end position="245"/>
    </location>
</feature>
<feature type="helix" evidence="2">
    <location>
        <begin position="248"/>
        <end position="259"/>
    </location>
</feature>
<feature type="helix" evidence="2">
    <location>
        <begin position="264"/>
        <end position="266"/>
    </location>
</feature>
<feature type="helix" evidence="2">
    <location>
        <begin position="272"/>
        <end position="281"/>
    </location>
</feature>
<feature type="helix" evidence="2">
    <location>
        <begin position="284"/>
        <end position="286"/>
    </location>
</feature>
<feature type="helix" evidence="2">
    <location>
        <begin position="290"/>
        <end position="299"/>
    </location>
</feature>
<feature type="helix" evidence="2">
    <location>
        <begin position="305"/>
        <end position="311"/>
    </location>
</feature>
<feature type="helix" evidence="2">
    <location>
        <begin position="318"/>
        <end position="330"/>
    </location>
</feature>
<feature type="helix" evidence="2">
    <location>
        <begin position="334"/>
        <end position="343"/>
    </location>
</feature>
<feature type="strand" evidence="2">
    <location>
        <begin position="350"/>
        <end position="353"/>
    </location>
</feature>
<accession>Q58361</accession>
<organism>
    <name type="scientific">Methanocaldococcus jannaschii (strain ATCC 43067 / DSM 2661 / JAL-1 / JCM 10045 / NBRC 100440)</name>
    <name type="common">Methanococcus jannaschii</name>
    <dbReference type="NCBI Taxonomy" id="243232"/>
    <lineage>
        <taxon>Archaea</taxon>
        <taxon>Methanobacteriati</taxon>
        <taxon>Methanobacteriota</taxon>
        <taxon>Methanomada group</taxon>
        <taxon>Methanococci</taxon>
        <taxon>Methanococcales</taxon>
        <taxon>Methanocaldococcaceae</taxon>
        <taxon>Methanocaldococcus</taxon>
    </lineage>
</organism>